<organism>
    <name type="scientific">Ehrlichia ruminantium (strain Gardel)</name>
    <dbReference type="NCBI Taxonomy" id="302409"/>
    <lineage>
        <taxon>Bacteria</taxon>
        <taxon>Pseudomonadati</taxon>
        <taxon>Pseudomonadota</taxon>
        <taxon>Alphaproteobacteria</taxon>
        <taxon>Rickettsiales</taxon>
        <taxon>Anaplasmataceae</taxon>
        <taxon>Ehrlichia</taxon>
    </lineage>
</organism>
<feature type="chain" id="PRO_0000167457" description="Ribosome-recycling factor">
    <location>
        <begin position="1"/>
        <end position="185"/>
    </location>
</feature>
<name>RRF_EHRRG</name>
<dbReference type="EMBL" id="CR925677">
    <property type="protein sequence ID" value="CAI28205.1"/>
    <property type="molecule type" value="Genomic_DNA"/>
</dbReference>
<dbReference type="RefSeq" id="WP_011255826.1">
    <property type="nucleotide sequence ID" value="NC_006831.1"/>
</dbReference>
<dbReference type="SMR" id="Q5FG66"/>
<dbReference type="KEGG" id="erg:ERGA_CDS_07530"/>
<dbReference type="HOGENOM" id="CLU_073981_2_1_5"/>
<dbReference type="OrthoDB" id="9804006at2"/>
<dbReference type="Proteomes" id="UP000000533">
    <property type="component" value="Chromosome"/>
</dbReference>
<dbReference type="GO" id="GO:0005737">
    <property type="term" value="C:cytoplasm"/>
    <property type="evidence" value="ECO:0007669"/>
    <property type="project" value="UniProtKB-SubCell"/>
</dbReference>
<dbReference type="GO" id="GO:0043023">
    <property type="term" value="F:ribosomal large subunit binding"/>
    <property type="evidence" value="ECO:0007669"/>
    <property type="project" value="TreeGrafter"/>
</dbReference>
<dbReference type="GO" id="GO:0006415">
    <property type="term" value="P:translational termination"/>
    <property type="evidence" value="ECO:0007669"/>
    <property type="project" value="UniProtKB-UniRule"/>
</dbReference>
<dbReference type="CDD" id="cd00520">
    <property type="entry name" value="RRF"/>
    <property type="match status" value="1"/>
</dbReference>
<dbReference type="FunFam" id="1.10.132.20:FF:000001">
    <property type="entry name" value="Ribosome-recycling factor"/>
    <property type="match status" value="1"/>
</dbReference>
<dbReference type="FunFam" id="3.30.1360.40:FF:000001">
    <property type="entry name" value="Ribosome-recycling factor"/>
    <property type="match status" value="1"/>
</dbReference>
<dbReference type="Gene3D" id="3.30.1360.40">
    <property type="match status" value="1"/>
</dbReference>
<dbReference type="Gene3D" id="1.10.132.20">
    <property type="entry name" value="Ribosome-recycling factor"/>
    <property type="match status" value="1"/>
</dbReference>
<dbReference type="HAMAP" id="MF_00040">
    <property type="entry name" value="RRF"/>
    <property type="match status" value="1"/>
</dbReference>
<dbReference type="InterPro" id="IPR002661">
    <property type="entry name" value="Ribosome_recyc_fac"/>
</dbReference>
<dbReference type="InterPro" id="IPR023584">
    <property type="entry name" value="Ribosome_recyc_fac_dom"/>
</dbReference>
<dbReference type="InterPro" id="IPR036191">
    <property type="entry name" value="RRF_sf"/>
</dbReference>
<dbReference type="NCBIfam" id="TIGR00496">
    <property type="entry name" value="frr"/>
    <property type="match status" value="1"/>
</dbReference>
<dbReference type="PANTHER" id="PTHR20982:SF3">
    <property type="entry name" value="MITOCHONDRIAL RIBOSOME RECYCLING FACTOR PSEUDO 1"/>
    <property type="match status" value="1"/>
</dbReference>
<dbReference type="PANTHER" id="PTHR20982">
    <property type="entry name" value="RIBOSOME RECYCLING FACTOR"/>
    <property type="match status" value="1"/>
</dbReference>
<dbReference type="Pfam" id="PF01765">
    <property type="entry name" value="RRF"/>
    <property type="match status" value="1"/>
</dbReference>
<dbReference type="SUPFAM" id="SSF55194">
    <property type="entry name" value="Ribosome recycling factor, RRF"/>
    <property type="match status" value="1"/>
</dbReference>
<keyword id="KW-0963">Cytoplasm</keyword>
<keyword id="KW-0648">Protein biosynthesis</keyword>
<sequence length="185" mass="20748">MINTIKQDAKNRMEKTLSVYLSDVDGIRTGRARASVLDGIVVETYGGRVKLNTISSISVSDNKTLLVKVWDINNVGAIKTAIINSNLGFGFSCEGAVIRLTVPDMTQDMRKNLVKLLGKISEDCRISIRNIRRDIMDKLKIMQDNKDISEDDLRIAGVEIQKITDEIIKKINDTFLAKEKELLHV</sequence>
<evidence type="ECO:0000255" key="1">
    <source>
        <dbReference type="HAMAP-Rule" id="MF_00040"/>
    </source>
</evidence>
<protein>
    <recommendedName>
        <fullName evidence="1">Ribosome-recycling factor</fullName>
        <shortName evidence="1">RRF</shortName>
    </recommendedName>
    <alternativeName>
        <fullName evidence="1">Ribosome-releasing factor</fullName>
    </alternativeName>
</protein>
<accession>Q5FG66</accession>
<reference key="1">
    <citation type="journal article" date="2006" name="J. Bacteriol.">
        <title>Comparative genomic analysis of three strains of Ehrlichia ruminantium reveals an active process of genome size plasticity.</title>
        <authorList>
            <person name="Frutos R."/>
            <person name="Viari A."/>
            <person name="Ferraz C."/>
            <person name="Morgat A."/>
            <person name="Eychenie S."/>
            <person name="Kandassamy Y."/>
            <person name="Chantal I."/>
            <person name="Bensaid A."/>
            <person name="Coissac E."/>
            <person name="Vachiery N."/>
            <person name="Demaille J."/>
            <person name="Martinez D."/>
        </authorList>
    </citation>
    <scope>NUCLEOTIDE SEQUENCE [LARGE SCALE GENOMIC DNA]</scope>
    <source>
        <strain>Gardel</strain>
    </source>
</reference>
<gene>
    <name evidence="1" type="primary">frr</name>
    <name type="ordered locus">ERGA_CDS_07530</name>
</gene>
<comment type="function">
    <text evidence="1">Responsible for the release of ribosomes from messenger RNA at the termination of protein biosynthesis. May increase the efficiency of translation by recycling ribosomes from one round of translation to another.</text>
</comment>
<comment type="subcellular location">
    <subcellularLocation>
        <location evidence="1">Cytoplasm</location>
    </subcellularLocation>
</comment>
<comment type="similarity">
    <text evidence="1">Belongs to the RRF family.</text>
</comment>
<proteinExistence type="inferred from homology"/>